<proteinExistence type="inferred from homology"/>
<evidence type="ECO:0000255" key="1">
    <source>
        <dbReference type="HAMAP-Rule" id="MF_00391"/>
    </source>
</evidence>
<evidence type="ECO:0000256" key="2">
    <source>
        <dbReference type="SAM" id="MobiDB-lite"/>
    </source>
</evidence>
<evidence type="ECO:0000305" key="3"/>
<accession>B9MQF8</accession>
<reference key="1">
    <citation type="submission" date="2009-01" db="EMBL/GenBank/DDBJ databases">
        <title>Complete sequence of chromosome of Caldicellulosiruptor becscii DSM 6725.</title>
        <authorList>
            <person name="Lucas S."/>
            <person name="Copeland A."/>
            <person name="Lapidus A."/>
            <person name="Glavina del Rio T."/>
            <person name="Tice H."/>
            <person name="Bruce D."/>
            <person name="Goodwin L."/>
            <person name="Pitluck S."/>
            <person name="Sims D."/>
            <person name="Meincke L."/>
            <person name="Brettin T."/>
            <person name="Detter J.C."/>
            <person name="Han C."/>
            <person name="Larimer F."/>
            <person name="Land M."/>
            <person name="Hauser L."/>
            <person name="Kyrpides N."/>
            <person name="Ovchinnikova G."/>
            <person name="Kataeva I."/>
            <person name="Adams M.W.W."/>
        </authorList>
    </citation>
    <scope>NUCLEOTIDE SEQUENCE [LARGE SCALE GENOMIC DNA]</scope>
    <source>
        <strain>ATCC BAA-1888 / DSM 6725 / KCTC 15123 / Z-1320</strain>
    </source>
</reference>
<comment type="similarity">
    <text evidence="1">Belongs to the bacterial ribosomal protein bL34 family.</text>
</comment>
<protein>
    <recommendedName>
        <fullName evidence="1">Large ribosomal subunit protein bL34</fullName>
    </recommendedName>
    <alternativeName>
        <fullName evidence="3">50S ribosomal protein L34</fullName>
    </alternativeName>
</protein>
<sequence length="44" mass="5457">MKRTYQPHNKRRKRTHGFLVRMRTKGGRKVLKRRRLKGRKRLAV</sequence>
<feature type="chain" id="PRO_1000196004" description="Large ribosomal subunit protein bL34">
    <location>
        <begin position="1"/>
        <end position="44"/>
    </location>
</feature>
<feature type="region of interest" description="Disordered" evidence="2">
    <location>
        <begin position="25"/>
        <end position="44"/>
    </location>
</feature>
<dbReference type="EMBL" id="CP001393">
    <property type="protein sequence ID" value="ACM61815.1"/>
    <property type="molecule type" value="Genomic_DNA"/>
</dbReference>
<dbReference type="RefSeq" id="WP_013291559.1">
    <property type="nucleotide sequence ID" value="NC_012034.1"/>
</dbReference>
<dbReference type="SMR" id="B9MQF8"/>
<dbReference type="STRING" id="521460.Athe_2763"/>
<dbReference type="GeneID" id="31774115"/>
<dbReference type="KEGG" id="ate:Athe_2763"/>
<dbReference type="eggNOG" id="COG0230">
    <property type="taxonomic scope" value="Bacteria"/>
</dbReference>
<dbReference type="HOGENOM" id="CLU_129938_2_0_9"/>
<dbReference type="Proteomes" id="UP000007723">
    <property type="component" value="Chromosome"/>
</dbReference>
<dbReference type="GO" id="GO:1990904">
    <property type="term" value="C:ribonucleoprotein complex"/>
    <property type="evidence" value="ECO:0007669"/>
    <property type="project" value="UniProtKB-KW"/>
</dbReference>
<dbReference type="GO" id="GO:0005840">
    <property type="term" value="C:ribosome"/>
    <property type="evidence" value="ECO:0007669"/>
    <property type="project" value="UniProtKB-KW"/>
</dbReference>
<dbReference type="GO" id="GO:0003735">
    <property type="term" value="F:structural constituent of ribosome"/>
    <property type="evidence" value="ECO:0007669"/>
    <property type="project" value="InterPro"/>
</dbReference>
<dbReference type="GO" id="GO:0006412">
    <property type="term" value="P:translation"/>
    <property type="evidence" value="ECO:0007669"/>
    <property type="project" value="UniProtKB-UniRule"/>
</dbReference>
<dbReference type="FunFam" id="1.10.287.3980:FF:000001">
    <property type="entry name" value="Mitochondrial ribosomal protein L34"/>
    <property type="match status" value="1"/>
</dbReference>
<dbReference type="Gene3D" id="1.10.287.3980">
    <property type="match status" value="1"/>
</dbReference>
<dbReference type="HAMAP" id="MF_00391">
    <property type="entry name" value="Ribosomal_bL34"/>
    <property type="match status" value="1"/>
</dbReference>
<dbReference type="InterPro" id="IPR000271">
    <property type="entry name" value="Ribosomal_bL34"/>
</dbReference>
<dbReference type="InterPro" id="IPR020939">
    <property type="entry name" value="Ribosomal_bL34_CS"/>
</dbReference>
<dbReference type="NCBIfam" id="TIGR01030">
    <property type="entry name" value="rpmH_bact"/>
    <property type="match status" value="1"/>
</dbReference>
<dbReference type="PANTHER" id="PTHR14503:SF4">
    <property type="entry name" value="LARGE RIBOSOMAL SUBUNIT PROTEIN BL34M"/>
    <property type="match status" value="1"/>
</dbReference>
<dbReference type="PANTHER" id="PTHR14503">
    <property type="entry name" value="MITOCHONDRIAL RIBOSOMAL PROTEIN 34 FAMILY MEMBER"/>
    <property type="match status" value="1"/>
</dbReference>
<dbReference type="Pfam" id="PF00468">
    <property type="entry name" value="Ribosomal_L34"/>
    <property type="match status" value="1"/>
</dbReference>
<dbReference type="PROSITE" id="PS00784">
    <property type="entry name" value="RIBOSOMAL_L34"/>
    <property type="match status" value="1"/>
</dbReference>
<gene>
    <name evidence="1" type="primary">rpmH</name>
    <name type="ordered locus">Athe_2763</name>
</gene>
<keyword id="KW-0687">Ribonucleoprotein</keyword>
<keyword id="KW-0689">Ribosomal protein</keyword>
<name>RL34_CALBD</name>
<organism>
    <name type="scientific">Caldicellulosiruptor bescii (strain ATCC BAA-1888 / DSM 6725 / KCTC 15123 / Z-1320)</name>
    <name type="common">Anaerocellum thermophilum</name>
    <dbReference type="NCBI Taxonomy" id="521460"/>
    <lineage>
        <taxon>Bacteria</taxon>
        <taxon>Bacillati</taxon>
        <taxon>Bacillota</taxon>
        <taxon>Bacillota incertae sedis</taxon>
        <taxon>Caldicellulosiruptorales</taxon>
        <taxon>Caldicellulosiruptoraceae</taxon>
        <taxon>Caldicellulosiruptor</taxon>
    </lineage>
</organism>